<evidence type="ECO:0000305" key="1"/>
<accession>Q54EJ7</accession>
<sequence length="84" mass="9394">MIIKNGEGESKIIGKAITLPTPKIFPQPFFIRLSEYTSEGNLWDNENFEFNSGKVECNGEDYDLAPSTCSLAKFDEDDGSKKLI</sequence>
<organism>
    <name type="scientific">Dictyostelium discoideum</name>
    <name type="common">Social amoeba</name>
    <dbReference type="NCBI Taxonomy" id="44689"/>
    <lineage>
        <taxon>Eukaryota</taxon>
        <taxon>Amoebozoa</taxon>
        <taxon>Evosea</taxon>
        <taxon>Eumycetozoa</taxon>
        <taxon>Dictyostelia</taxon>
        <taxon>Dictyosteliales</taxon>
        <taxon>Dictyosteliaceae</taxon>
        <taxon>Dictyostelium</taxon>
    </lineage>
</organism>
<protein>
    <recommendedName>
        <fullName>Uncharacterized protein csb family protein DDB_G0291672</fullName>
    </recommendedName>
</protein>
<dbReference type="EMBL" id="AAFI02000177">
    <property type="protein sequence ID" value="EAL61820.1"/>
    <property type="status" value="ALT_INIT"/>
    <property type="molecule type" value="Genomic_DNA"/>
</dbReference>
<dbReference type="RefSeq" id="XP_635243.1">
    <property type="nucleotide sequence ID" value="XM_630151.1"/>
</dbReference>
<dbReference type="PaxDb" id="44689-DDB0219674"/>
<dbReference type="EnsemblProtists" id="EAL61820">
    <property type="protein sequence ID" value="EAL61820"/>
    <property type="gene ID" value="DDB_G0291672"/>
</dbReference>
<dbReference type="GeneID" id="8628189"/>
<dbReference type="KEGG" id="ddi:DDB_G0291672"/>
<dbReference type="dictyBase" id="DDB_G0291672"/>
<dbReference type="VEuPathDB" id="AmoebaDB:DDB_G0291672"/>
<dbReference type="InParanoid" id="Q54EJ7"/>
<dbReference type="PhylomeDB" id="Q54EJ7"/>
<dbReference type="PRO" id="PR:Q54EJ7"/>
<dbReference type="Proteomes" id="UP000002195">
    <property type="component" value="Chromosome 6"/>
</dbReference>
<dbReference type="GO" id="GO:0007155">
    <property type="term" value="P:cell adhesion"/>
    <property type="evidence" value="ECO:0007669"/>
    <property type="project" value="InterPro"/>
</dbReference>
<dbReference type="InterPro" id="IPR008601">
    <property type="entry name" value="Dicty_CAD"/>
</dbReference>
<dbReference type="Pfam" id="PF05720">
    <property type="entry name" value="Dicty_CAD"/>
    <property type="match status" value="1"/>
</dbReference>
<proteinExistence type="inferred from homology"/>
<reference key="1">
    <citation type="journal article" date="2005" name="Nature">
        <title>The genome of the social amoeba Dictyostelium discoideum.</title>
        <authorList>
            <person name="Eichinger L."/>
            <person name="Pachebat J.A."/>
            <person name="Gloeckner G."/>
            <person name="Rajandream M.A."/>
            <person name="Sucgang R."/>
            <person name="Berriman M."/>
            <person name="Song J."/>
            <person name="Olsen R."/>
            <person name="Szafranski K."/>
            <person name="Xu Q."/>
            <person name="Tunggal B."/>
            <person name="Kummerfeld S."/>
            <person name="Madera M."/>
            <person name="Konfortov B.A."/>
            <person name="Rivero F."/>
            <person name="Bankier A.T."/>
            <person name="Lehmann R."/>
            <person name="Hamlin N."/>
            <person name="Davies R."/>
            <person name="Gaudet P."/>
            <person name="Fey P."/>
            <person name="Pilcher K."/>
            <person name="Chen G."/>
            <person name="Saunders D."/>
            <person name="Sodergren E.J."/>
            <person name="Davis P."/>
            <person name="Kerhornou A."/>
            <person name="Nie X."/>
            <person name="Hall N."/>
            <person name="Anjard C."/>
            <person name="Hemphill L."/>
            <person name="Bason N."/>
            <person name="Farbrother P."/>
            <person name="Desany B."/>
            <person name="Just E."/>
            <person name="Morio T."/>
            <person name="Rost R."/>
            <person name="Churcher C.M."/>
            <person name="Cooper J."/>
            <person name="Haydock S."/>
            <person name="van Driessche N."/>
            <person name="Cronin A."/>
            <person name="Goodhead I."/>
            <person name="Muzny D.M."/>
            <person name="Mourier T."/>
            <person name="Pain A."/>
            <person name="Lu M."/>
            <person name="Harper D."/>
            <person name="Lindsay R."/>
            <person name="Hauser H."/>
            <person name="James K.D."/>
            <person name="Quiles M."/>
            <person name="Madan Babu M."/>
            <person name="Saito T."/>
            <person name="Buchrieser C."/>
            <person name="Wardroper A."/>
            <person name="Felder M."/>
            <person name="Thangavelu M."/>
            <person name="Johnson D."/>
            <person name="Knights A."/>
            <person name="Loulseged H."/>
            <person name="Mungall K.L."/>
            <person name="Oliver K."/>
            <person name="Price C."/>
            <person name="Quail M.A."/>
            <person name="Urushihara H."/>
            <person name="Hernandez J."/>
            <person name="Rabbinowitsch E."/>
            <person name="Steffen D."/>
            <person name="Sanders M."/>
            <person name="Ma J."/>
            <person name="Kohara Y."/>
            <person name="Sharp S."/>
            <person name="Simmonds M.N."/>
            <person name="Spiegler S."/>
            <person name="Tivey A."/>
            <person name="Sugano S."/>
            <person name="White B."/>
            <person name="Walker D."/>
            <person name="Woodward J.R."/>
            <person name="Winckler T."/>
            <person name="Tanaka Y."/>
            <person name="Shaulsky G."/>
            <person name="Schleicher M."/>
            <person name="Weinstock G.M."/>
            <person name="Rosenthal A."/>
            <person name="Cox E.C."/>
            <person name="Chisholm R.L."/>
            <person name="Gibbs R.A."/>
            <person name="Loomis W.F."/>
            <person name="Platzer M."/>
            <person name="Kay R.R."/>
            <person name="Williams J.G."/>
            <person name="Dear P.H."/>
            <person name="Noegel A.A."/>
            <person name="Barrell B.G."/>
            <person name="Kuspa A."/>
        </authorList>
    </citation>
    <scope>NUCLEOTIDE SEQUENCE [LARGE SCALE GENOMIC DNA]</scope>
    <source>
        <strain>AX4</strain>
    </source>
</reference>
<feature type="chain" id="PRO_0000312414" description="Uncharacterized protein csb family protein DDB_G0291672">
    <location>
        <begin position="1"/>
        <end position="84"/>
    </location>
</feature>
<keyword id="KW-1185">Reference proteome</keyword>
<name>CSBL6_DICDI</name>
<gene>
    <name type="ORF">DDB_G0291672</name>
</gene>
<comment type="similarity">
    <text evidence="1">Belongs to the csb family.</text>
</comment>
<comment type="sequence caution" evidence="1">
    <conflict type="erroneous initiation">
        <sequence resource="EMBL-CDS" id="EAL61820"/>
    </conflict>
    <text>Extended N-terminus.</text>
</comment>